<gene>
    <name type="primary">abd1</name>
    <name type="ORF">ACLA_081840</name>
</gene>
<reference key="1">
    <citation type="journal article" date="2008" name="PLoS Genet.">
        <title>Genomic islands in the pathogenic filamentous fungus Aspergillus fumigatus.</title>
        <authorList>
            <person name="Fedorova N.D."/>
            <person name="Khaldi N."/>
            <person name="Joardar V.S."/>
            <person name="Maiti R."/>
            <person name="Amedeo P."/>
            <person name="Anderson M.J."/>
            <person name="Crabtree J."/>
            <person name="Silva J.C."/>
            <person name="Badger J.H."/>
            <person name="Albarraq A."/>
            <person name="Angiuoli S."/>
            <person name="Bussey H."/>
            <person name="Bowyer P."/>
            <person name="Cotty P.J."/>
            <person name="Dyer P.S."/>
            <person name="Egan A."/>
            <person name="Galens K."/>
            <person name="Fraser-Liggett C.M."/>
            <person name="Haas B.J."/>
            <person name="Inman J.M."/>
            <person name="Kent R."/>
            <person name="Lemieux S."/>
            <person name="Malavazi I."/>
            <person name="Orvis J."/>
            <person name="Roemer T."/>
            <person name="Ronning C.M."/>
            <person name="Sundaram J.P."/>
            <person name="Sutton G."/>
            <person name="Turner G."/>
            <person name="Venter J.C."/>
            <person name="White O.R."/>
            <person name="Whitty B.R."/>
            <person name="Youngman P."/>
            <person name="Wolfe K.H."/>
            <person name="Goldman G.H."/>
            <person name="Wortman J.R."/>
            <person name="Jiang B."/>
            <person name="Denning D.W."/>
            <person name="Nierman W.C."/>
        </authorList>
    </citation>
    <scope>NUCLEOTIDE SEQUENCE [LARGE SCALE GENOMIC DNA]</scope>
    <source>
        <strain>ATCC 1007 / CBS 513.65 / DSM 816 / NCTC 3887 / NRRL 1 / QM 1276 / 107</strain>
    </source>
</reference>
<organism>
    <name type="scientific">Aspergillus clavatus (strain ATCC 1007 / CBS 513.65 / DSM 816 / NCTC 3887 / NRRL 1 / QM 1276 / 107)</name>
    <dbReference type="NCBI Taxonomy" id="344612"/>
    <lineage>
        <taxon>Eukaryota</taxon>
        <taxon>Fungi</taxon>
        <taxon>Dikarya</taxon>
        <taxon>Ascomycota</taxon>
        <taxon>Pezizomycotina</taxon>
        <taxon>Eurotiomycetes</taxon>
        <taxon>Eurotiomycetidae</taxon>
        <taxon>Eurotiales</taxon>
        <taxon>Aspergillaceae</taxon>
        <taxon>Aspergillus</taxon>
        <taxon>Aspergillus subgen. Fumigati</taxon>
    </lineage>
</organism>
<name>MCES_ASPCL</name>
<keyword id="KW-0489">Methyltransferase</keyword>
<keyword id="KW-0506">mRNA capping</keyword>
<keyword id="KW-0507">mRNA processing</keyword>
<keyword id="KW-0539">Nucleus</keyword>
<keyword id="KW-1185">Reference proteome</keyword>
<keyword id="KW-0694">RNA-binding</keyword>
<keyword id="KW-0949">S-adenosyl-L-methionine</keyword>
<keyword id="KW-0808">Transferase</keyword>
<sequence length="551" mass="62163">MENRSSSGTPRPSAGSPDAAKRPSETSPAAGRIPAGQNGSSGDKKRKVTEEGEASEKSEPPADRPMSKRKRMEERHQKLRKRGRTPPSAYSRRDAEAAPVPNRNRDDPANRSLSPLPHRSPTPEEQPRQRKRPGGGARMGLVDRETLRRRQEERERALVEEAMRTSQGRGVTDVVRQHYNAVPQRGREWRKTESKIKGLRSFNNWIKSTLIQKFSPDEEFLARLNDGRDWADDSGPPPAEEKRLLVVDLGCGKGGDLGKWQLAPQPVELYVGLDPAEVSIVQARERYNSMKSGRGNRGRRNPLFHGEFAPKDCFGEWLGDIGIVQQVGIDPNAGPGGSVMSSRWGGGGFDVVASMFAIHYAFESEEKARQMLRNVAGCLKKGGRFLGVCPNSDIISARVVELNAKRKAREEQEKKEKSDEAPEDGEVEEDTKLEWGNSIYRVQFPGKTPEDGIFRPPFGWKYSYFMEEAVEEVPEYVVPWEAFRALTEDYNLELQYRKPFLGIWGDEKDDRELGPLSERMGVRDRNTGELLMTEEEKEAANFYHAFCFYKV</sequence>
<accession>A1CT57</accession>
<protein>
    <recommendedName>
        <fullName>mRNA cap guanine-N(7) methyltransferase</fullName>
        <ecNumber evidence="2">2.1.1.56</ecNumber>
    </recommendedName>
    <alternativeName>
        <fullName>mRNA (guanine-N(7))-methyltransferase</fullName>
    </alternativeName>
    <alternativeName>
        <fullName>mRNA cap methyltransferase</fullName>
    </alternativeName>
</protein>
<evidence type="ECO:0000250" key="1"/>
<evidence type="ECO:0000250" key="2">
    <source>
        <dbReference type="UniProtKB" id="O43148"/>
    </source>
</evidence>
<evidence type="ECO:0000255" key="3">
    <source>
        <dbReference type="PROSITE-ProRule" id="PRU00895"/>
    </source>
</evidence>
<evidence type="ECO:0000256" key="4">
    <source>
        <dbReference type="SAM" id="MobiDB-lite"/>
    </source>
</evidence>
<comment type="function">
    <text evidence="1">Responsible for methylating the 5'-cap structure of mRNAs.</text>
</comment>
<comment type="catalytic activity">
    <reaction evidence="2 3">
        <text>a 5'-end (5'-triphosphoguanosine)-ribonucleoside in mRNA + S-adenosyl-L-methionine = a 5'-end (N(7)-methyl 5'-triphosphoguanosine)-ribonucleoside in mRNA + S-adenosyl-L-homocysteine</text>
        <dbReference type="Rhea" id="RHEA:67008"/>
        <dbReference type="Rhea" id="RHEA-COMP:17166"/>
        <dbReference type="Rhea" id="RHEA-COMP:17167"/>
        <dbReference type="ChEBI" id="CHEBI:57856"/>
        <dbReference type="ChEBI" id="CHEBI:59789"/>
        <dbReference type="ChEBI" id="CHEBI:156461"/>
        <dbReference type="ChEBI" id="CHEBI:167617"/>
        <dbReference type="EC" id="2.1.1.56"/>
    </reaction>
</comment>
<comment type="subcellular location">
    <subcellularLocation>
        <location evidence="1">Nucleus</location>
    </subcellularLocation>
</comment>
<comment type="similarity">
    <text evidence="3">Belongs to the class I-like SAM-binding methyltransferase superfamily. mRNA cap 0 methyltransferase family.</text>
</comment>
<feature type="chain" id="PRO_0000303901" description="mRNA cap guanine-N(7) methyltransferase">
    <location>
        <begin position="1"/>
        <end position="551"/>
    </location>
</feature>
<feature type="domain" description="mRNA cap 0 methyltransferase" evidence="3">
    <location>
        <begin position="194"/>
        <end position="551"/>
    </location>
</feature>
<feature type="region of interest" description="Disordered" evidence="4">
    <location>
        <begin position="1"/>
        <end position="152"/>
    </location>
</feature>
<feature type="region of interest" description="Disordered" evidence="4">
    <location>
        <begin position="407"/>
        <end position="430"/>
    </location>
</feature>
<feature type="compositionally biased region" description="Polar residues" evidence="4">
    <location>
        <begin position="1"/>
        <end position="10"/>
    </location>
</feature>
<feature type="compositionally biased region" description="Basic and acidic residues" evidence="4">
    <location>
        <begin position="48"/>
        <end position="76"/>
    </location>
</feature>
<feature type="compositionally biased region" description="Basic and acidic residues" evidence="4">
    <location>
        <begin position="141"/>
        <end position="152"/>
    </location>
</feature>
<feature type="compositionally biased region" description="Basic and acidic residues" evidence="4">
    <location>
        <begin position="408"/>
        <end position="420"/>
    </location>
</feature>
<feature type="compositionally biased region" description="Acidic residues" evidence="4">
    <location>
        <begin position="421"/>
        <end position="430"/>
    </location>
</feature>
<feature type="binding site" evidence="3">
    <location>
        <begin position="203"/>
        <end position="204"/>
    </location>
    <ligand>
        <name>mRNA</name>
        <dbReference type="ChEBI" id="CHEBI:33699"/>
    </ligand>
    <ligandPart>
        <name>mRNA cap</name>
    </ligandPart>
</feature>
<feature type="binding site" evidence="3">
    <location>
        <position position="207"/>
    </location>
    <ligand>
        <name>S-adenosyl-L-methionine</name>
        <dbReference type="ChEBI" id="CHEBI:59789"/>
    </ligand>
</feature>
<feature type="binding site" evidence="3">
    <location>
        <position position="250"/>
    </location>
    <ligand>
        <name>S-adenosyl-L-methionine</name>
        <dbReference type="ChEBI" id="CHEBI:59789"/>
    </ligand>
</feature>
<feature type="binding site" evidence="3">
    <location>
        <position position="274"/>
    </location>
    <ligand>
        <name>S-adenosyl-L-methionine</name>
        <dbReference type="ChEBI" id="CHEBI:59789"/>
    </ligand>
</feature>
<feature type="binding site" evidence="2">
    <location>
        <position position="312"/>
    </location>
    <ligand>
        <name>S-adenosyl-L-methionine</name>
        <dbReference type="ChEBI" id="CHEBI:59789"/>
    </ligand>
</feature>
<feature type="binding site" evidence="3">
    <location>
        <begin position="355"/>
        <end position="357"/>
    </location>
    <ligand>
        <name>S-adenosyl-L-methionine</name>
        <dbReference type="ChEBI" id="CHEBI:59789"/>
    </ligand>
</feature>
<feature type="binding site" evidence="2">
    <location>
        <position position="360"/>
    </location>
    <ligand>
        <name>S-adenosyl-L-methionine</name>
        <dbReference type="ChEBI" id="CHEBI:59789"/>
    </ligand>
</feature>
<feature type="site" description="mRNA cap binding" evidence="3">
    <location>
        <position position="253"/>
    </location>
</feature>
<feature type="site" description="mRNA cap binding" evidence="3">
    <location>
        <position position="259"/>
    </location>
</feature>
<feature type="site" description="mRNA cap binding" evidence="3">
    <location>
        <position position="286"/>
    </location>
</feature>
<feature type="site" description="mRNA cap binding" evidence="3">
    <location>
        <position position="359"/>
    </location>
</feature>
<feature type="site" description="mRNA cap binding" evidence="3">
    <location>
        <position position="475"/>
    </location>
</feature>
<feature type="site" description="mRNA cap binding" evidence="3">
    <location>
        <position position="543"/>
    </location>
</feature>
<proteinExistence type="inferred from homology"/>
<dbReference type="EC" id="2.1.1.56" evidence="2"/>
<dbReference type="EMBL" id="DS027060">
    <property type="protein sequence ID" value="EAW06494.1"/>
    <property type="molecule type" value="Genomic_DNA"/>
</dbReference>
<dbReference type="RefSeq" id="XP_001267920.1">
    <property type="nucleotide sequence ID" value="XM_001267919.1"/>
</dbReference>
<dbReference type="SMR" id="A1CT57"/>
<dbReference type="STRING" id="344612.A1CT57"/>
<dbReference type="EnsemblFungi" id="EAW06494">
    <property type="protein sequence ID" value="EAW06494"/>
    <property type="gene ID" value="ACLA_081840"/>
</dbReference>
<dbReference type="GeneID" id="4700241"/>
<dbReference type="KEGG" id="act:ACLA_081840"/>
<dbReference type="VEuPathDB" id="FungiDB:ACLA_081840"/>
<dbReference type="eggNOG" id="KOG1975">
    <property type="taxonomic scope" value="Eukaryota"/>
</dbReference>
<dbReference type="HOGENOM" id="CLU_020346_3_0_1"/>
<dbReference type="OMA" id="KPFLEVW"/>
<dbReference type="OrthoDB" id="10248867at2759"/>
<dbReference type="Proteomes" id="UP000006701">
    <property type="component" value="Unassembled WGS sequence"/>
</dbReference>
<dbReference type="GO" id="GO:0005634">
    <property type="term" value="C:nucleus"/>
    <property type="evidence" value="ECO:0007669"/>
    <property type="project" value="UniProtKB-SubCell"/>
</dbReference>
<dbReference type="GO" id="GO:0004482">
    <property type="term" value="F:mRNA 5'-cap (guanine-N7-)-methyltransferase activity"/>
    <property type="evidence" value="ECO:0007669"/>
    <property type="project" value="UniProtKB-EC"/>
</dbReference>
<dbReference type="GO" id="GO:0003723">
    <property type="term" value="F:RNA binding"/>
    <property type="evidence" value="ECO:0007669"/>
    <property type="project" value="UniProtKB-KW"/>
</dbReference>
<dbReference type="FunFam" id="3.40.50.150:FF:000231">
    <property type="entry name" value="mRNA cap guanine-N7 methyltransferase"/>
    <property type="match status" value="1"/>
</dbReference>
<dbReference type="Gene3D" id="3.40.50.150">
    <property type="entry name" value="Vaccinia Virus protein VP39"/>
    <property type="match status" value="1"/>
</dbReference>
<dbReference type="InterPro" id="IPR004971">
    <property type="entry name" value="mRNA_G-N7_MeTrfase_dom"/>
</dbReference>
<dbReference type="InterPro" id="IPR016899">
    <property type="entry name" value="mRNA_G-N7_MeTrfase_euk"/>
</dbReference>
<dbReference type="InterPro" id="IPR039753">
    <property type="entry name" value="RG7MT1"/>
</dbReference>
<dbReference type="InterPro" id="IPR029063">
    <property type="entry name" value="SAM-dependent_MTases_sf"/>
</dbReference>
<dbReference type="PANTHER" id="PTHR12189:SF2">
    <property type="entry name" value="MRNA CAP GUANINE-N7 METHYLTRANSFERASE"/>
    <property type="match status" value="1"/>
</dbReference>
<dbReference type="PANTHER" id="PTHR12189">
    <property type="entry name" value="MRNA GUANINE-7- METHYLTRANSFERASE"/>
    <property type="match status" value="1"/>
</dbReference>
<dbReference type="Pfam" id="PF03291">
    <property type="entry name" value="mRNA_G-N7_MeTrfase"/>
    <property type="match status" value="1"/>
</dbReference>
<dbReference type="PIRSF" id="PIRSF028762">
    <property type="entry name" value="ABD1"/>
    <property type="match status" value="1"/>
</dbReference>
<dbReference type="SUPFAM" id="SSF53335">
    <property type="entry name" value="S-adenosyl-L-methionine-dependent methyltransferases"/>
    <property type="match status" value="1"/>
</dbReference>
<dbReference type="PROSITE" id="PS51562">
    <property type="entry name" value="RNA_CAP0_MT"/>
    <property type="match status" value="1"/>
</dbReference>